<sequence length="540" mass="60568">MLRNLLLLLLPLLIEAKLPPFFLGRLNGKTLLNHHLDRLTASDGASIQETYPNLQVHNFTQKLDHFDPYNTKTWNQKYFYNPVFSRNNSIIFLMIGGEGPENGKWAANPNVQYLQWAKEFGADVFDLEHRFFGDSWPIPDMQTSSLRYLTTQQALADLAFFIEFMNQQYGFKNPRWVTFGGSYPGSLAAWFRQKYPQLTVGSVASSAPVNLKLDFYEYAMVVEDDLRITDPKCAQATKDAFVQMQKLALTAEGRNSLNNHFNLQPPFDANTTKLDINNFFGNIFNTYQGMTQYTYDGQSNSTHSDKTVRKMCDIMTNATETDVVMRVENLFLWFNQMEPASANLTVMPNSYWDVISQVGSGDLNVLGPDGAAARGWMWLCCNEIGFLQTTNQGNNVFGTGVPLNLFIDMCTDMFGDSMKMSQIMGGNKKSQNYYGGADFYNATNVVLPNGSLDPWHALGTYGTIKSQSLLPYLINGTAHCGDMYPSYDGEPGSLLAARAFVKENVRQFIRYDPNVDGPGGSSSSASLFVVAYIVCGFLFV</sequence>
<name>YM9I_CAEEL</name>
<evidence type="ECO:0000255" key="1"/>
<evidence type="ECO:0000269" key="2">
    <source>
    </source>
</evidence>
<evidence type="ECO:0000305" key="3"/>
<comment type="similarity">
    <text evidence="3">Belongs to the peptidase S28 family.</text>
</comment>
<reference key="1">
    <citation type="journal article" date="1998" name="Science">
        <title>Genome sequence of the nematode C. elegans: a platform for investigating biology.</title>
        <authorList>
            <consortium name="The C. elegans sequencing consortium"/>
        </authorList>
    </citation>
    <scope>NUCLEOTIDE SEQUENCE [LARGE SCALE GENOMIC DNA]</scope>
    <source>
        <strain>Bristol N2</strain>
    </source>
</reference>
<reference key="2">
    <citation type="journal article" date="2007" name="Mol. Cell. Proteomics">
        <title>Proteomics reveals N-linked glycoprotein diversity in Caenorhabditis elegans and suggests an atypical translocation mechanism for integral membrane proteins.</title>
        <authorList>
            <person name="Kaji H."/>
            <person name="Kamiie J."/>
            <person name="Kawakami H."/>
            <person name="Kido K."/>
            <person name="Yamauchi Y."/>
            <person name="Shinkawa T."/>
            <person name="Taoka M."/>
            <person name="Takahashi N."/>
            <person name="Isobe T."/>
        </authorList>
    </citation>
    <scope>GLYCOSYLATION [LARGE SCALE ANALYSIS] AT ASN-87</scope>
    <scope>IDENTIFICATION BY MASS SPECTROMETRY</scope>
    <source>
        <strain>Bristol N2</strain>
    </source>
</reference>
<dbReference type="EC" id="3.4.-.-"/>
<dbReference type="EMBL" id="FO081336">
    <property type="protein sequence ID" value="CCD70865.1"/>
    <property type="molecule type" value="Genomic_DNA"/>
</dbReference>
<dbReference type="PIR" id="T16490">
    <property type="entry name" value="T16490"/>
</dbReference>
<dbReference type="RefSeq" id="NP_001294837.1">
    <property type="nucleotide sequence ID" value="NM_001307908.3"/>
</dbReference>
<dbReference type="SMR" id="P90893"/>
<dbReference type="FunCoup" id="P90893">
    <property type="interactions" value="126"/>
</dbReference>
<dbReference type="STRING" id="6239.F56F10.1.1"/>
<dbReference type="ESTHER" id="caeel-ym9i">
    <property type="family name" value="Prolylcarboxypeptidase"/>
</dbReference>
<dbReference type="MEROPS" id="S28.A14"/>
<dbReference type="iPTMnet" id="P90893"/>
<dbReference type="PaxDb" id="6239-F56F10.1.2"/>
<dbReference type="PeptideAtlas" id="P90893"/>
<dbReference type="EnsemblMetazoa" id="F56F10.1.1">
    <property type="protein sequence ID" value="F56F10.1.1"/>
    <property type="gene ID" value="WBGene00018984"/>
</dbReference>
<dbReference type="GeneID" id="24104657"/>
<dbReference type="KEGG" id="cel:CELE_F56F10.1"/>
<dbReference type="UCSC" id="F56F10.1.1">
    <property type="organism name" value="c. elegans"/>
</dbReference>
<dbReference type="AGR" id="WB:WBGene00018984"/>
<dbReference type="CTD" id="24104657"/>
<dbReference type="WormBase" id="F56F10.1">
    <property type="protein sequence ID" value="CE34034"/>
    <property type="gene ID" value="WBGene00018984"/>
</dbReference>
<dbReference type="eggNOG" id="KOG2182">
    <property type="taxonomic scope" value="Eukaryota"/>
</dbReference>
<dbReference type="GeneTree" id="ENSGT00940000164087"/>
<dbReference type="HOGENOM" id="CLU_020959_3_1_1"/>
<dbReference type="InParanoid" id="P90893"/>
<dbReference type="OMA" id="GAATNIH"/>
<dbReference type="OrthoDB" id="1735038at2759"/>
<dbReference type="PhylomeDB" id="P90893"/>
<dbReference type="PRO" id="PR:P90893"/>
<dbReference type="Proteomes" id="UP000001940">
    <property type="component" value="Chromosome X"/>
</dbReference>
<dbReference type="Bgee" id="WBGene00018984">
    <property type="expression patterns" value="Expressed in larva and 3 other cell types or tissues"/>
</dbReference>
<dbReference type="GO" id="GO:0045121">
    <property type="term" value="C:membrane raft"/>
    <property type="evidence" value="ECO:0007005"/>
    <property type="project" value="WormBase"/>
</dbReference>
<dbReference type="GO" id="GO:0008239">
    <property type="term" value="F:dipeptidyl-peptidase activity"/>
    <property type="evidence" value="ECO:0000318"/>
    <property type="project" value="GO_Central"/>
</dbReference>
<dbReference type="GO" id="GO:0070008">
    <property type="term" value="F:serine-type exopeptidase activity"/>
    <property type="evidence" value="ECO:0007669"/>
    <property type="project" value="InterPro"/>
</dbReference>
<dbReference type="GO" id="GO:0045087">
    <property type="term" value="P:innate immune response"/>
    <property type="evidence" value="ECO:0007007"/>
    <property type="project" value="WormBase"/>
</dbReference>
<dbReference type="GO" id="GO:0006508">
    <property type="term" value="P:proteolysis"/>
    <property type="evidence" value="ECO:0007669"/>
    <property type="project" value="UniProtKB-KW"/>
</dbReference>
<dbReference type="FunFam" id="1.20.120.980:FF:000003">
    <property type="entry name" value="Serine protease 16"/>
    <property type="match status" value="1"/>
</dbReference>
<dbReference type="Gene3D" id="3.40.50.1820">
    <property type="entry name" value="alpha/beta hydrolase"/>
    <property type="match status" value="1"/>
</dbReference>
<dbReference type="Gene3D" id="1.20.120.980">
    <property type="entry name" value="Serine carboxypeptidase S28, SKS domain"/>
    <property type="match status" value="1"/>
</dbReference>
<dbReference type="InterPro" id="IPR029058">
    <property type="entry name" value="AB_hydrolase_fold"/>
</dbReference>
<dbReference type="InterPro" id="IPR008758">
    <property type="entry name" value="Peptidase_S28"/>
</dbReference>
<dbReference type="InterPro" id="IPR042269">
    <property type="entry name" value="Ser_carbopepase_S28_SKS"/>
</dbReference>
<dbReference type="PANTHER" id="PTHR11010">
    <property type="entry name" value="PROTEASE S28 PRO-X CARBOXYPEPTIDASE-RELATED"/>
    <property type="match status" value="1"/>
</dbReference>
<dbReference type="PANTHER" id="PTHR11010:SF101">
    <property type="entry name" value="SERINE PROTEASE F56F10.1-RELATED"/>
    <property type="match status" value="1"/>
</dbReference>
<dbReference type="Pfam" id="PF05577">
    <property type="entry name" value="Peptidase_S28"/>
    <property type="match status" value="1"/>
</dbReference>
<dbReference type="SUPFAM" id="SSF53474">
    <property type="entry name" value="alpha/beta-Hydrolases"/>
    <property type="match status" value="1"/>
</dbReference>
<gene>
    <name type="ORF">F56F10.1</name>
</gene>
<feature type="signal peptide" evidence="1">
    <location>
        <begin position="1"/>
        <end position="16"/>
    </location>
</feature>
<feature type="chain" id="PRO_0000027325" description="Putative serine protease F56F10.1">
    <location>
        <begin position="17"/>
        <end position="540"/>
    </location>
</feature>
<feature type="active site" description="Charge relay system" evidence="1">
    <location>
        <position position="182"/>
    </location>
</feature>
<feature type="active site" description="Charge relay system" evidence="1">
    <location>
        <position position="453"/>
    </location>
</feature>
<feature type="active site" description="Charge relay system" evidence="1">
    <location>
        <position position="479"/>
    </location>
</feature>
<feature type="glycosylation site" description="N-linked (GlcNAc...) asparagine" evidence="1">
    <location>
        <position position="58"/>
    </location>
</feature>
<feature type="glycosylation site" description="N-linked (GlcNAc...) asparagine" evidence="2">
    <location>
        <position position="87"/>
    </location>
</feature>
<feature type="glycosylation site" description="N-linked (GlcNAc...) asparagine" evidence="1">
    <location>
        <position position="270"/>
    </location>
</feature>
<feature type="glycosylation site" description="N-linked (GlcNAc...) asparagine" evidence="1">
    <location>
        <position position="300"/>
    </location>
</feature>
<feature type="glycosylation site" description="N-linked (GlcNAc...) asparagine" evidence="1">
    <location>
        <position position="317"/>
    </location>
</feature>
<feature type="glycosylation site" description="N-linked (GlcNAc...) asparagine" evidence="1">
    <location>
        <position position="343"/>
    </location>
</feature>
<feature type="glycosylation site" description="N-linked (GlcNAc...) asparagine" evidence="1">
    <location>
        <position position="441"/>
    </location>
</feature>
<feature type="glycosylation site" description="N-linked (GlcNAc...) asparagine" evidence="1">
    <location>
        <position position="449"/>
    </location>
</feature>
<feature type="glycosylation site" description="N-linked (GlcNAc...) asparagine" evidence="1">
    <location>
        <position position="475"/>
    </location>
</feature>
<organism>
    <name type="scientific">Caenorhabditis elegans</name>
    <dbReference type="NCBI Taxonomy" id="6239"/>
    <lineage>
        <taxon>Eukaryota</taxon>
        <taxon>Metazoa</taxon>
        <taxon>Ecdysozoa</taxon>
        <taxon>Nematoda</taxon>
        <taxon>Chromadorea</taxon>
        <taxon>Rhabditida</taxon>
        <taxon>Rhabditina</taxon>
        <taxon>Rhabditomorpha</taxon>
        <taxon>Rhabditoidea</taxon>
        <taxon>Rhabditidae</taxon>
        <taxon>Peloderinae</taxon>
        <taxon>Caenorhabditis</taxon>
    </lineage>
</organism>
<accession>P90893</accession>
<keyword id="KW-0325">Glycoprotein</keyword>
<keyword id="KW-0378">Hydrolase</keyword>
<keyword id="KW-0645">Protease</keyword>
<keyword id="KW-1185">Reference proteome</keyword>
<keyword id="KW-0720">Serine protease</keyword>
<keyword id="KW-0732">Signal</keyword>
<proteinExistence type="evidence at protein level"/>
<protein>
    <recommendedName>
        <fullName>Putative serine protease F56F10.1</fullName>
        <ecNumber>3.4.-.-</ecNumber>
    </recommendedName>
</protein>